<reference key="1">
    <citation type="journal article" date="1992" name="Virology">
        <title>Evolution of hepatitis delta virus RNA during chronic infection.</title>
        <authorList>
            <person name="Lee C.M."/>
            <person name="Bih F.Y."/>
            <person name="Chao Y.C."/>
            <person name="Govindarajan S."/>
            <person name="Lai M.M.C."/>
        </authorList>
    </citation>
    <scope>NUCLEOTIDE SEQUENCE [GENOMIC RNA]</scope>
</reference>
<reference key="2">
    <citation type="journal article" date="2005" name="Acta Virol.">
        <title>Hepatitis D.</title>
        <authorList>
            <person name="Husa P."/>
            <person name="Linhartova A."/>
            <person name="Nemecek V."/>
            <person name="Husova L."/>
        </authorList>
    </citation>
    <scope>REVIEW</scope>
</reference>
<reference key="3">
    <citation type="journal article" date="2006" name="Curr. Top. Microbiol. Immunol.">
        <title>Post-translational modification of delta antigen of hepatitis D virus.</title>
        <authorList>
            <person name="Huang W.H."/>
            <person name="Chen C.W."/>
            <person name="Wu H.L."/>
            <person name="Chen P.J."/>
        </authorList>
    </citation>
    <scope>REVIEW</scope>
</reference>
<keyword id="KW-0007">Acetylation</keyword>
<keyword id="KW-1048">Host nucleus</keyword>
<keyword id="KW-0449">Lipoprotein</keyword>
<keyword id="KW-0488">Methylation</keyword>
<keyword id="KW-0597">Phosphoprotein</keyword>
<keyword id="KW-0636">Prenylation</keyword>
<keyword id="KW-0691">RNA editing</keyword>
<keyword id="KW-0694">RNA-binding</keyword>
<keyword id="KW-1163">Viral penetration into host nucleus</keyword>
<keyword id="KW-0946">Virion</keyword>
<keyword id="KW-1160">Virus entry into host cell</keyword>
<organismHost>
    <name type="scientific">Homo sapiens</name>
    <name type="common">Human</name>
    <dbReference type="NCBI Taxonomy" id="9606"/>
</organismHost>
<proteinExistence type="inferred from homology"/>
<organism>
    <name type="scientific">Hepatitis delta virus genotype I (isolate Lebanon-1)</name>
    <name type="common">HDV</name>
    <dbReference type="NCBI Taxonomy" id="31763"/>
    <lineage>
        <taxon>Viruses</taxon>
        <taxon>Ribozyviria</taxon>
        <taxon>Kolmioviridae</taxon>
        <taxon>Deltavirus</taxon>
        <taxon>Hepatitis delta virus</taxon>
    </lineage>
</organism>
<accession>P0C6M1</accession>
<evidence type="ECO:0000250" key="1"/>
<evidence type="ECO:0000250" key="2">
    <source>
        <dbReference type="UniProtKB" id="P0C6L3"/>
    </source>
</evidence>
<evidence type="ECO:0000250" key="3">
    <source>
        <dbReference type="UniProtKB" id="P29996"/>
    </source>
</evidence>
<evidence type="ECO:0000255" key="4"/>
<evidence type="ECO:0000255" key="5">
    <source>
        <dbReference type="PROSITE-ProRule" id="PRU01183"/>
    </source>
</evidence>
<evidence type="ECO:0000256" key="6">
    <source>
        <dbReference type="SAM" id="MobiDB-lite"/>
    </source>
</evidence>
<evidence type="ECO:0000305" key="7"/>
<dbReference type="EMBL" id="M84917">
    <property type="status" value="NOT_ANNOTATED_CDS"/>
    <property type="molecule type" value="Genomic_RNA"/>
</dbReference>
<dbReference type="PIR" id="A40247">
    <property type="entry name" value="SAVLL1"/>
</dbReference>
<dbReference type="SMR" id="P0C6M1"/>
<dbReference type="Proteomes" id="UP000008107">
    <property type="component" value="Genome"/>
</dbReference>
<dbReference type="GO" id="GO:0043657">
    <property type="term" value="C:host cell"/>
    <property type="evidence" value="ECO:0007669"/>
    <property type="project" value="GOC"/>
</dbReference>
<dbReference type="GO" id="GO:0044196">
    <property type="term" value="C:host cell nucleolus"/>
    <property type="evidence" value="ECO:0007669"/>
    <property type="project" value="UniProtKB-SubCell"/>
</dbReference>
<dbReference type="GO" id="GO:0044423">
    <property type="term" value="C:virion component"/>
    <property type="evidence" value="ECO:0007669"/>
    <property type="project" value="UniProtKB-KW"/>
</dbReference>
<dbReference type="GO" id="GO:0003723">
    <property type="term" value="F:RNA binding"/>
    <property type="evidence" value="ECO:0007669"/>
    <property type="project" value="UniProtKB-KW"/>
</dbReference>
<dbReference type="GO" id="GO:0046718">
    <property type="term" value="P:symbiont entry into host cell"/>
    <property type="evidence" value="ECO:0007669"/>
    <property type="project" value="UniProtKB-KW"/>
</dbReference>
<dbReference type="GO" id="GO:0075732">
    <property type="term" value="P:viral penetration into host nucleus"/>
    <property type="evidence" value="ECO:0007669"/>
    <property type="project" value="UniProtKB-KW"/>
</dbReference>
<dbReference type="Gene3D" id="4.10.220.40">
    <property type="entry name" value="Delta antigen, N-terminal"/>
    <property type="match status" value="1"/>
</dbReference>
<dbReference type="InterPro" id="IPR027403">
    <property type="entry name" value="Delta_antigen_N"/>
</dbReference>
<dbReference type="InterPro" id="IPR037517">
    <property type="entry name" value="HDAG_dom"/>
</dbReference>
<dbReference type="InterPro" id="IPR002506">
    <property type="entry name" value="HDV_ag"/>
</dbReference>
<dbReference type="Pfam" id="PF01517">
    <property type="entry name" value="HDV_ag"/>
    <property type="match status" value="1"/>
</dbReference>
<dbReference type="SUPFAM" id="SSF58108">
    <property type="entry name" value="Oligomerization domain of hepatitis delta antigen"/>
    <property type="match status" value="1"/>
</dbReference>
<dbReference type="PROSITE" id="PS51838">
    <property type="entry name" value="HDAG"/>
    <property type="match status" value="1"/>
</dbReference>
<comment type="function">
    <text evidence="1">Following virus entry into host cell, provides nuclear import of HDV RNPs thanks to its nuclear localization signal. Needs co-infection with hepatitis B virus to provide surface proteins, otherwise there is no packaging or budding. Packages the HDV ribonucleoprotein in hepatitis B virus empty particles. Interacts with both HDV genomic RNA and cytoplasmic tail of HBsAg. May inhibit viral RNA replication (By similarity).</text>
</comment>
<comment type="subunit">
    <text evidence="1">Homodimer. Homooctamer. Interacts with HBV HBsAg. May interact with clathrin to induce virion budding (By similarity).</text>
</comment>
<comment type="subcellular location">
    <subcellularLocation>
        <location>Virion</location>
    </subcellularLocation>
    <subcellularLocation>
        <location>Host nucleus</location>
        <location>Host nucleolus</location>
    </subcellularLocation>
    <text evidence="1">isoprenylated in the cytoplasm, and translocates in the nucleus possibly after phosphorylation. Translocates after to nuclear speckle, then to the ER membrane where interaction with Hepatitis B virus antigene takes place (By similarity).</text>
</comment>
<comment type="PTM">
    <text evidence="1">Prenylated by host farnesyl-transferase in the cytoplasm prior to nucleus translocation.</text>
</comment>
<comment type="PTM">
    <text evidence="1">Phosphorylated at serines by host CK2 and other kinases. phosphorylation does not seem to be important for its function (By similarity).</text>
</comment>
<comment type="RNA editing">
    <location>
        <position position="196" evidence="1"/>
    </location>
    <text evidence="1">Partially edited. RNA editing at this position occurs on the antigenomic strand and consists of a conversion of A to G catalyzed by the cellular enzyme ADAR1. The unedited RNA version gives rise to the small delta antigen (AC P29833), which ends with a nonsense codon at position 196. In the edited version, this amber codon is modified to a tryptophan codon and gives rise to the large delta antigen protein. S-HDAg suppresses editing of non-replicating antigenomic RNA, thereby regulating the extent of editing (By similarity).</text>
</comment>
<comment type="miscellaneous">
    <text>This strain belongs to the genotype I found in North America, Europe, Africa, East and West Asia and the South Pacific.</text>
</comment>
<comment type="similarity">
    <text evidence="7">Belongs to the hepatitis delta antigen family.</text>
</comment>
<sequence length="214" mass="24046">MSRSESKKNRGGREEVLEQWVNSRKKAEELERDLRKTKKKIKKLEDDNPWLGNIKGILGKKDKDGEGAPPAKRARTDQMEVDSGPRKRPLRGGFTDQERQDHRRRKALENKKKQLAGGGKNLSREEEEELGRLTEEDEKRKRRVAGPPTGGVNPLEGGQRGAPGGGFVPSMQGVPESPFHRHGEGLDARGDRGFPWDILFPSDPPFSPQSCRPQ</sequence>
<name>LHDAG_HDVL1</name>
<protein>
    <recommendedName>
        <fullName>Large delta antigen</fullName>
        <shortName>L-HDAg</shortName>
    </recommendedName>
    <alternativeName>
        <fullName>p27</fullName>
    </alternativeName>
</protein>
<feature type="chain" id="PRO_0000038134" description="Large delta antigen">
    <location>
        <begin position="1"/>
        <end position="211"/>
    </location>
</feature>
<feature type="propeptide" id="PRO_0000396791" description="Removed in mature form" evidence="3">
    <location>
        <begin position="212"/>
        <end position="214"/>
    </location>
</feature>
<feature type="domain" description="HDAg" evidence="5">
    <location>
        <begin position="20"/>
        <end position="195"/>
    </location>
</feature>
<feature type="region of interest" description="Dimerization" evidence="4">
    <location>
        <begin position="12"/>
        <end position="60"/>
    </location>
</feature>
<feature type="region of interest" description="Disordered" evidence="6">
    <location>
        <begin position="39"/>
        <end position="214"/>
    </location>
</feature>
<feature type="region of interest" description="RNA-binding" evidence="5">
    <location>
        <begin position="97"/>
        <end position="107"/>
    </location>
</feature>
<feature type="region of interest" description="RNAPII-binding" evidence="5">
    <location>
        <begin position="130"/>
        <end position="195"/>
    </location>
</feature>
<feature type="region of interest" description="RNA-binding" evidence="5">
    <location>
        <begin position="136"/>
        <end position="146"/>
    </location>
</feature>
<feature type="short sequence motif" description="Nuclear localization signal" evidence="3">
    <location>
        <begin position="66"/>
        <end position="75"/>
    </location>
</feature>
<feature type="compositionally biased region" description="Basic and acidic residues" evidence="6">
    <location>
        <begin position="96"/>
        <end position="112"/>
    </location>
</feature>
<feature type="compositionally biased region" description="Basic and acidic residues" evidence="6">
    <location>
        <begin position="130"/>
        <end position="139"/>
    </location>
</feature>
<feature type="compositionally biased region" description="Gly residues" evidence="6">
    <location>
        <begin position="158"/>
        <end position="167"/>
    </location>
</feature>
<feature type="compositionally biased region" description="Basic and acidic residues" evidence="6">
    <location>
        <begin position="178"/>
        <end position="194"/>
    </location>
</feature>
<feature type="modified residue" description="Phosphoserine; by host" evidence="3">
    <location>
        <position position="2"/>
    </location>
</feature>
<feature type="modified residue" description="Omega-N-methylated arginine; by host" evidence="2">
    <location>
        <position position="13"/>
    </location>
</feature>
<feature type="modified residue" description="N6-acetyllysine; by host" evidence="2">
    <location>
        <position position="72"/>
    </location>
</feature>
<feature type="modified residue" description="Phosphoserine; by host" evidence="3">
    <location>
        <position position="123"/>
    </location>
</feature>
<feature type="modified residue" description="Phosphoserine; by host" evidence="3">
    <location>
        <position position="177"/>
    </location>
</feature>
<feature type="modified residue" description="Cysteine methyl ester; by host" evidence="3">
    <location>
        <position position="211"/>
    </location>
</feature>
<feature type="lipid moiety-binding region" description="S-farnesyl cysteine; by host" evidence="3">
    <location>
        <position position="211"/>
    </location>
</feature>